<gene>
    <name evidence="1" type="primary">truB</name>
    <name type="ordered locus">Meso_3932</name>
</gene>
<sequence>MARRGKKKGRAVSGWLVLDKPAGLGSTEAVSKVKWLFGAQKAGHAGTLDPLASGMLPIALGEATKTVPYVMEGAKVYRFTVAWGEERSTDDLEGPVTKSCDKVPVEEDIRALLPRYTGLIMQTPPQFSAVKIGGERAYDLAREGEVVEIAAREVEIGRLDLISIPEPKKAVFEVECGKGTYVRSLARDMGRDLGCFGHVADLRRTEVYPFETQQLVPLKDLEGAAADAETESDRFSALDSYLLDTEAALDGLPEIVLGDDAAGRIRLGNPVIVRGRDAPVQAPEAWASLRGRLIAIGMVEAGMFKPKRVFGL</sequence>
<accession>Q11BC6</accession>
<dbReference type="EC" id="5.4.99.25" evidence="1"/>
<dbReference type="EMBL" id="CP000390">
    <property type="protein sequence ID" value="ABG65299.1"/>
    <property type="molecule type" value="Genomic_DNA"/>
</dbReference>
<dbReference type="SMR" id="Q11BC6"/>
<dbReference type="STRING" id="266779.Meso_3932"/>
<dbReference type="KEGG" id="mes:Meso_3932"/>
<dbReference type="eggNOG" id="COG0130">
    <property type="taxonomic scope" value="Bacteria"/>
</dbReference>
<dbReference type="HOGENOM" id="CLU_032087_0_3_5"/>
<dbReference type="OrthoDB" id="9802309at2"/>
<dbReference type="GO" id="GO:0003723">
    <property type="term" value="F:RNA binding"/>
    <property type="evidence" value="ECO:0007669"/>
    <property type="project" value="InterPro"/>
</dbReference>
<dbReference type="GO" id="GO:0160148">
    <property type="term" value="F:tRNA pseudouridine(55) synthase activity"/>
    <property type="evidence" value="ECO:0007669"/>
    <property type="project" value="UniProtKB-EC"/>
</dbReference>
<dbReference type="GO" id="GO:1990481">
    <property type="term" value="P:mRNA pseudouridine synthesis"/>
    <property type="evidence" value="ECO:0007669"/>
    <property type="project" value="TreeGrafter"/>
</dbReference>
<dbReference type="GO" id="GO:0031119">
    <property type="term" value="P:tRNA pseudouridine synthesis"/>
    <property type="evidence" value="ECO:0007669"/>
    <property type="project" value="UniProtKB-UniRule"/>
</dbReference>
<dbReference type="CDD" id="cd02573">
    <property type="entry name" value="PseudoU_synth_EcTruB"/>
    <property type="match status" value="1"/>
</dbReference>
<dbReference type="Gene3D" id="3.30.2350.10">
    <property type="entry name" value="Pseudouridine synthase"/>
    <property type="match status" value="1"/>
</dbReference>
<dbReference type="HAMAP" id="MF_01080">
    <property type="entry name" value="TruB_bact"/>
    <property type="match status" value="1"/>
</dbReference>
<dbReference type="InterPro" id="IPR020103">
    <property type="entry name" value="PsdUridine_synth_cat_dom_sf"/>
</dbReference>
<dbReference type="InterPro" id="IPR002501">
    <property type="entry name" value="PsdUridine_synth_N"/>
</dbReference>
<dbReference type="InterPro" id="IPR014780">
    <property type="entry name" value="tRNA_psdUridine_synth_TruB"/>
</dbReference>
<dbReference type="InterPro" id="IPR032819">
    <property type="entry name" value="TruB_C"/>
</dbReference>
<dbReference type="NCBIfam" id="TIGR00431">
    <property type="entry name" value="TruB"/>
    <property type="match status" value="1"/>
</dbReference>
<dbReference type="PANTHER" id="PTHR13767:SF2">
    <property type="entry name" value="PSEUDOURIDYLATE SYNTHASE TRUB1"/>
    <property type="match status" value="1"/>
</dbReference>
<dbReference type="PANTHER" id="PTHR13767">
    <property type="entry name" value="TRNA-PSEUDOURIDINE SYNTHASE"/>
    <property type="match status" value="1"/>
</dbReference>
<dbReference type="Pfam" id="PF16198">
    <property type="entry name" value="TruB_C_2"/>
    <property type="match status" value="1"/>
</dbReference>
<dbReference type="Pfam" id="PF01509">
    <property type="entry name" value="TruB_N"/>
    <property type="match status" value="1"/>
</dbReference>
<dbReference type="SUPFAM" id="SSF55120">
    <property type="entry name" value="Pseudouridine synthase"/>
    <property type="match status" value="1"/>
</dbReference>
<feature type="chain" id="PRO_1000084623" description="tRNA pseudouridine synthase B">
    <location>
        <begin position="1"/>
        <end position="312"/>
    </location>
</feature>
<feature type="active site" description="Nucleophile" evidence="1">
    <location>
        <position position="49"/>
    </location>
</feature>
<protein>
    <recommendedName>
        <fullName evidence="1">tRNA pseudouridine synthase B</fullName>
        <ecNumber evidence="1">5.4.99.25</ecNumber>
    </recommendedName>
    <alternativeName>
        <fullName evidence="1">tRNA pseudouridine(55) synthase</fullName>
        <shortName evidence="1">Psi55 synthase</shortName>
    </alternativeName>
    <alternativeName>
        <fullName evidence="1">tRNA pseudouridylate synthase</fullName>
    </alternativeName>
    <alternativeName>
        <fullName evidence="1">tRNA-uridine isomerase</fullName>
    </alternativeName>
</protein>
<proteinExistence type="inferred from homology"/>
<evidence type="ECO:0000255" key="1">
    <source>
        <dbReference type="HAMAP-Rule" id="MF_01080"/>
    </source>
</evidence>
<keyword id="KW-0413">Isomerase</keyword>
<keyword id="KW-0819">tRNA processing</keyword>
<name>TRUB_CHESB</name>
<organism>
    <name type="scientific">Chelativorans sp. (strain BNC1)</name>
    <dbReference type="NCBI Taxonomy" id="266779"/>
    <lineage>
        <taxon>Bacteria</taxon>
        <taxon>Pseudomonadati</taxon>
        <taxon>Pseudomonadota</taxon>
        <taxon>Alphaproteobacteria</taxon>
        <taxon>Hyphomicrobiales</taxon>
        <taxon>Phyllobacteriaceae</taxon>
        <taxon>Chelativorans</taxon>
    </lineage>
</organism>
<reference key="1">
    <citation type="submission" date="2006-06" db="EMBL/GenBank/DDBJ databases">
        <title>Complete sequence of chromosome of Mesorhizobium sp. BNC1.</title>
        <authorList>
            <consortium name="US DOE Joint Genome Institute"/>
            <person name="Copeland A."/>
            <person name="Lucas S."/>
            <person name="Lapidus A."/>
            <person name="Barry K."/>
            <person name="Detter J.C."/>
            <person name="Glavina del Rio T."/>
            <person name="Hammon N."/>
            <person name="Israni S."/>
            <person name="Dalin E."/>
            <person name="Tice H."/>
            <person name="Pitluck S."/>
            <person name="Chertkov O."/>
            <person name="Brettin T."/>
            <person name="Bruce D."/>
            <person name="Han C."/>
            <person name="Tapia R."/>
            <person name="Gilna P."/>
            <person name="Schmutz J."/>
            <person name="Larimer F."/>
            <person name="Land M."/>
            <person name="Hauser L."/>
            <person name="Kyrpides N."/>
            <person name="Mikhailova N."/>
            <person name="Richardson P."/>
        </authorList>
    </citation>
    <scope>NUCLEOTIDE SEQUENCE [LARGE SCALE GENOMIC DNA]</scope>
    <source>
        <strain>BNC1</strain>
    </source>
</reference>
<comment type="function">
    <text evidence="1">Responsible for synthesis of pseudouridine from uracil-55 in the psi GC loop of transfer RNAs.</text>
</comment>
<comment type="catalytic activity">
    <reaction evidence="1">
        <text>uridine(55) in tRNA = pseudouridine(55) in tRNA</text>
        <dbReference type="Rhea" id="RHEA:42532"/>
        <dbReference type="Rhea" id="RHEA-COMP:10101"/>
        <dbReference type="Rhea" id="RHEA-COMP:10102"/>
        <dbReference type="ChEBI" id="CHEBI:65314"/>
        <dbReference type="ChEBI" id="CHEBI:65315"/>
        <dbReference type="EC" id="5.4.99.25"/>
    </reaction>
</comment>
<comment type="similarity">
    <text evidence="1">Belongs to the pseudouridine synthase TruB family. Type 1 subfamily.</text>
</comment>